<feature type="chain" id="PRO_0000060829" description="Cytochrome b">
    <location>
        <begin position="1"/>
        <end position="379"/>
    </location>
</feature>
<feature type="transmembrane region" description="Helical" evidence="2">
    <location>
        <begin position="33"/>
        <end position="53"/>
    </location>
</feature>
<feature type="transmembrane region" description="Helical" evidence="2">
    <location>
        <begin position="77"/>
        <end position="98"/>
    </location>
</feature>
<feature type="transmembrane region" description="Helical" evidence="2">
    <location>
        <begin position="113"/>
        <end position="133"/>
    </location>
</feature>
<feature type="transmembrane region" description="Helical" evidence="2">
    <location>
        <begin position="178"/>
        <end position="198"/>
    </location>
</feature>
<feature type="transmembrane region" description="Helical" evidence="2">
    <location>
        <begin position="226"/>
        <end position="246"/>
    </location>
</feature>
<feature type="transmembrane region" description="Helical" evidence="2">
    <location>
        <begin position="288"/>
        <end position="308"/>
    </location>
</feature>
<feature type="transmembrane region" description="Helical" evidence="2">
    <location>
        <begin position="320"/>
        <end position="340"/>
    </location>
</feature>
<feature type="transmembrane region" description="Helical" evidence="2">
    <location>
        <begin position="347"/>
        <end position="367"/>
    </location>
</feature>
<feature type="binding site" description="axial binding residue" evidence="2">
    <location>
        <position position="83"/>
    </location>
    <ligand>
        <name>heme b</name>
        <dbReference type="ChEBI" id="CHEBI:60344"/>
        <label>b562</label>
    </ligand>
    <ligandPart>
        <name>Fe</name>
        <dbReference type="ChEBI" id="CHEBI:18248"/>
    </ligandPart>
</feature>
<feature type="binding site" description="axial binding residue" evidence="2">
    <location>
        <position position="97"/>
    </location>
    <ligand>
        <name>heme b</name>
        <dbReference type="ChEBI" id="CHEBI:60344"/>
        <label>b566</label>
    </ligand>
    <ligandPart>
        <name>Fe</name>
        <dbReference type="ChEBI" id="CHEBI:18248"/>
    </ligandPart>
</feature>
<feature type="binding site" description="axial binding residue" evidence="2">
    <location>
        <position position="182"/>
    </location>
    <ligand>
        <name>heme b</name>
        <dbReference type="ChEBI" id="CHEBI:60344"/>
        <label>b562</label>
    </ligand>
    <ligandPart>
        <name>Fe</name>
        <dbReference type="ChEBI" id="CHEBI:18248"/>
    </ligandPart>
</feature>
<feature type="binding site" description="axial binding residue" evidence="2">
    <location>
        <position position="196"/>
    </location>
    <ligand>
        <name>heme b</name>
        <dbReference type="ChEBI" id="CHEBI:60344"/>
        <label>b566</label>
    </ligand>
    <ligandPart>
        <name>Fe</name>
        <dbReference type="ChEBI" id="CHEBI:18248"/>
    </ligandPart>
</feature>
<feature type="binding site" evidence="2">
    <location>
        <position position="201"/>
    </location>
    <ligand>
        <name>a ubiquinone</name>
        <dbReference type="ChEBI" id="CHEBI:16389"/>
    </ligand>
</feature>
<gene>
    <name type="primary">MT-CYB</name>
    <name type="synonym">COB</name>
    <name type="synonym">CYTB</name>
    <name type="synonym">MTCYB</name>
</gene>
<comment type="function">
    <text evidence="2">Component of the ubiquinol-cytochrome c reductase complex (complex III or cytochrome b-c1 complex) that is part of the mitochondrial respiratory chain. The b-c1 complex mediates electron transfer from ubiquinol to cytochrome c. Contributes to the generation of a proton gradient across the mitochondrial membrane that is then used for ATP synthesis.</text>
</comment>
<comment type="cofactor">
    <cofactor evidence="2">
        <name>heme b</name>
        <dbReference type="ChEBI" id="CHEBI:60344"/>
    </cofactor>
    <text evidence="2">Binds 2 heme b groups non-covalently.</text>
</comment>
<comment type="subunit">
    <text evidence="2">The cytochrome bc1 complex contains 11 subunits: 3 respiratory subunits (MT-CYB, CYC1 and UQCRFS1), 2 core proteins (UQCRC1 and UQCRC2) and 6 low-molecular weight proteins (UQCRH/QCR6, UQCRB/QCR7, UQCRQ/QCR8, UQCR10/QCR9, UQCR11/QCR10 and a cleavage product of UQCRFS1). This cytochrome bc1 complex then forms a dimer.</text>
</comment>
<comment type="subcellular location">
    <subcellularLocation>
        <location evidence="2">Mitochondrion inner membrane</location>
        <topology evidence="2">Multi-pass membrane protein</topology>
    </subcellularLocation>
</comment>
<comment type="miscellaneous">
    <text evidence="1">Heme 1 (or BL or b562) is low-potential and absorbs at about 562 nm, and heme 2 (or BH or b566) is high-potential and absorbs at about 566 nm.</text>
</comment>
<comment type="similarity">
    <text evidence="3 4">Belongs to the cytochrome b family.</text>
</comment>
<comment type="caution">
    <text evidence="2">The full-length protein contains only eight transmembrane helices, not nine as predicted by bioinformatics tools.</text>
</comment>
<protein>
    <recommendedName>
        <fullName>Cytochrome b</fullName>
    </recommendedName>
    <alternativeName>
        <fullName>Complex III subunit 3</fullName>
    </alternativeName>
    <alternativeName>
        <fullName>Complex III subunit III</fullName>
    </alternativeName>
    <alternativeName>
        <fullName>Cytochrome b-c1 complex subunit 3</fullName>
    </alternativeName>
    <alternativeName>
        <fullName>Ubiquinol-cytochrome-c reductase complex cytochrome b subunit</fullName>
    </alternativeName>
</protein>
<organism>
    <name type="scientific">Crocidura lasiura</name>
    <name type="common">Ussuri white-toothed shrew</name>
    <dbReference type="NCBI Taxonomy" id="167043"/>
    <lineage>
        <taxon>Eukaryota</taxon>
        <taxon>Metazoa</taxon>
        <taxon>Chordata</taxon>
        <taxon>Craniata</taxon>
        <taxon>Vertebrata</taxon>
        <taxon>Euteleostomi</taxon>
        <taxon>Mammalia</taxon>
        <taxon>Eutheria</taxon>
        <taxon>Laurasiatheria</taxon>
        <taxon>Eulipotyphla</taxon>
        <taxon>Soricidae</taxon>
        <taxon>Crocidurinae</taxon>
        <taxon>Crocidura</taxon>
    </lineage>
</organism>
<evidence type="ECO:0000250" key="1"/>
<evidence type="ECO:0000250" key="2">
    <source>
        <dbReference type="UniProtKB" id="P00157"/>
    </source>
</evidence>
<evidence type="ECO:0000255" key="3">
    <source>
        <dbReference type="PROSITE-ProRule" id="PRU00967"/>
    </source>
</evidence>
<evidence type="ECO:0000255" key="4">
    <source>
        <dbReference type="PROSITE-ProRule" id="PRU00968"/>
    </source>
</evidence>
<geneLocation type="mitochondrion"/>
<accession>Q8SJX5</accession>
<reference key="1">
    <citation type="submission" date="2002-01" db="EMBL/GenBank/DDBJ databases">
        <title>Molecular phylogeny of East Asiatic white-toothed shrews genus Crocidura.</title>
        <authorList>
            <person name="Ohdachi S.D."/>
            <person name="Iwasa M.A."/>
            <person name="Han S."/>
        </authorList>
    </citation>
    <scope>NUCLEOTIDE SEQUENCE [GENOMIC DNA]</scope>
    <source>
        <strain>Isolate SO2Kmisc59</strain>
    </source>
</reference>
<dbReference type="EMBL" id="AB077072">
    <property type="protein sequence ID" value="BAB88572.1"/>
    <property type="molecule type" value="Genomic_DNA"/>
</dbReference>
<dbReference type="SMR" id="Q8SJX5"/>
<dbReference type="GO" id="GO:0005743">
    <property type="term" value="C:mitochondrial inner membrane"/>
    <property type="evidence" value="ECO:0007669"/>
    <property type="project" value="UniProtKB-SubCell"/>
</dbReference>
<dbReference type="GO" id="GO:0045275">
    <property type="term" value="C:respiratory chain complex III"/>
    <property type="evidence" value="ECO:0007669"/>
    <property type="project" value="InterPro"/>
</dbReference>
<dbReference type="GO" id="GO:0046872">
    <property type="term" value="F:metal ion binding"/>
    <property type="evidence" value="ECO:0007669"/>
    <property type="project" value="UniProtKB-KW"/>
</dbReference>
<dbReference type="GO" id="GO:0008121">
    <property type="term" value="F:ubiquinol-cytochrome-c reductase activity"/>
    <property type="evidence" value="ECO:0007669"/>
    <property type="project" value="InterPro"/>
</dbReference>
<dbReference type="GO" id="GO:0006122">
    <property type="term" value="P:mitochondrial electron transport, ubiquinol to cytochrome c"/>
    <property type="evidence" value="ECO:0007669"/>
    <property type="project" value="TreeGrafter"/>
</dbReference>
<dbReference type="CDD" id="cd00290">
    <property type="entry name" value="cytochrome_b_C"/>
    <property type="match status" value="1"/>
</dbReference>
<dbReference type="CDD" id="cd00284">
    <property type="entry name" value="Cytochrome_b_N"/>
    <property type="match status" value="1"/>
</dbReference>
<dbReference type="FunFam" id="1.20.810.10:FF:000002">
    <property type="entry name" value="Cytochrome b"/>
    <property type="match status" value="1"/>
</dbReference>
<dbReference type="Gene3D" id="1.20.810.10">
    <property type="entry name" value="Cytochrome Bc1 Complex, Chain C"/>
    <property type="match status" value="1"/>
</dbReference>
<dbReference type="InterPro" id="IPR005798">
    <property type="entry name" value="Cyt_b/b6_C"/>
</dbReference>
<dbReference type="InterPro" id="IPR036150">
    <property type="entry name" value="Cyt_b/b6_C_sf"/>
</dbReference>
<dbReference type="InterPro" id="IPR005797">
    <property type="entry name" value="Cyt_b/b6_N"/>
</dbReference>
<dbReference type="InterPro" id="IPR027387">
    <property type="entry name" value="Cytb/b6-like_sf"/>
</dbReference>
<dbReference type="InterPro" id="IPR030689">
    <property type="entry name" value="Cytochrome_b"/>
</dbReference>
<dbReference type="InterPro" id="IPR048260">
    <property type="entry name" value="Cytochrome_b_C_euk/bac"/>
</dbReference>
<dbReference type="InterPro" id="IPR048259">
    <property type="entry name" value="Cytochrome_b_N_euk/bac"/>
</dbReference>
<dbReference type="InterPro" id="IPR016174">
    <property type="entry name" value="Di-haem_cyt_TM"/>
</dbReference>
<dbReference type="PANTHER" id="PTHR19271">
    <property type="entry name" value="CYTOCHROME B"/>
    <property type="match status" value="1"/>
</dbReference>
<dbReference type="PANTHER" id="PTHR19271:SF16">
    <property type="entry name" value="CYTOCHROME B"/>
    <property type="match status" value="1"/>
</dbReference>
<dbReference type="Pfam" id="PF00032">
    <property type="entry name" value="Cytochrom_B_C"/>
    <property type="match status" value="1"/>
</dbReference>
<dbReference type="Pfam" id="PF00033">
    <property type="entry name" value="Cytochrome_B"/>
    <property type="match status" value="1"/>
</dbReference>
<dbReference type="PIRSF" id="PIRSF038885">
    <property type="entry name" value="COB"/>
    <property type="match status" value="1"/>
</dbReference>
<dbReference type="SUPFAM" id="SSF81648">
    <property type="entry name" value="a domain/subunit of cytochrome bc1 complex (Ubiquinol-cytochrome c reductase)"/>
    <property type="match status" value="1"/>
</dbReference>
<dbReference type="SUPFAM" id="SSF81342">
    <property type="entry name" value="Transmembrane di-heme cytochromes"/>
    <property type="match status" value="1"/>
</dbReference>
<dbReference type="PROSITE" id="PS51003">
    <property type="entry name" value="CYTB_CTER"/>
    <property type="match status" value="1"/>
</dbReference>
<dbReference type="PROSITE" id="PS51002">
    <property type="entry name" value="CYTB_NTER"/>
    <property type="match status" value="1"/>
</dbReference>
<proteinExistence type="inferred from homology"/>
<sequence length="379" mass="42496">MNNIRKTHPLMKIVNSSFIDLPAPSNISSWWNFGSLLGICLIAQILTGLFLAMHYTSDTMTAFSSVTHICRDVNYGWLIRYLHANGASMFFICLFLHVGRGLYYGSYMYLETWNIGVLLLFAVMATAFMGYVLPWGQMSFWGATVITNLLSAIPYIGTNLVEWIWGGFSVDKATLTRFFAFHFILPFIVAALAGIHLLFLHETGSNNPSGLDSDTDKIPFHPYYTIKDILGALIMITALSSLVLFSPDLLGDPDNYIPANPLNTPPHIKPEWYFLFAYAILRSIPNKLGGVLALVLSIAILAVIPLLHTAKQRSMMFRPLSQCLFWILVADLFTLTWIGGQPVEHPFVVIGQLASVIYFMLILLIMPATSMIENQLLKW</sequence>
<keyword id="KW-0249">Electron transport</keyword>
<keyword id="KW-0349">Heme</keyword>
<keyword id="KW-0408">Iron</keyword>
<keyword id="KW-0472">Membrane</keyword>
<keyword id="KW-0479">Metal-binding</keyword>
<keyword id="KW-0496">Mitochondrion</keyword>
<keyword id="KW-0999">Mitochondrion inner membrane</keyword>
<keyword id="KW-0679">Respiratory chain</keyword>
<keyword id="KW-0812">Transmembrane</keyword>
<keyword id="KW-1133">Transmembrane helix</keyword>
<keyword id="KW-0813">Transport</keyword>
<keyword id="KW-0830">Ubiquinone</keyword>
<name>CYB_CROLS</name>